<accession>O46512</accession>
<accession>O46513</accession>
<reference key="1">
    <citation type="journal article" date="1999" name="Endocrinology">
        <title>Dual regulation of promoter II- and promoter 1f-derived cytochrome P450 aromatase transcripts in equine granulosa cells during human chorionic gonadotropin-induced ovulation: a novel model for the study of aromatase promoter switching.</title>
        <authorList>
            <person name="Boerboom D."/>
            <person name="Kerban A."/>
            <person name="Sirois J."/>
        </authorList>
    </citation>
    <scope>NUCLEOTIDE SEQUENCE [MRNA] (CLONE A1 AND CLONE A17)</scope>
    <source>
        <tissue>Follicular cell</tissue>
    </source>
</reference>
<reference key="2">
    <citation type="journal article" date="2003" name="Biochim. Biophys. Acta">
        <title>Molecular characterization and expression of equine testicular cytochrome P450 aromatase.</title>
        <authorList>
            <person name="Seralini G.E."/>
            <person name="Tomilin A."/>
            <person name="Auvray P."/>
            <person name="Nativelle-Serpentini C."/>
            <person name="Sourdaine P."/>
            <person name="Moslemi S."/>
        </authorList>
    </citation>
    <scope>NUCLEOTIDE SEQUENCE [MRNA]</scope>
    <source>
        <tissue>Testis</tissue>
    </source>
</reference>
<sequence length="503" mass="57825">MILEMLNPMHYNLTSMVPEVMPVATLPILLLTGFLFFVWNHEETSSIPGPGYCMGIGPLISHLRFLWMGLGSACNYYNKMYGEFVRVWISGEETLVISKSSSTFHIMKHDHYSSRFGSTFGLQYMGMHENGVIFNNNPAVWKALRPFFVKALSGPSLARMVTVCVESVNNHLDRLDEVTNALGHVNVLTLMRRTMLDASNTLFLRIPLDEKNIVLKIQGYFDAWQALLIKPNIFFKISWLSRKHQKSIKELRDAVGILAEEKRHRIFTAEKLEDHVDFATDLILAEKRGELTKENVNQCILEMMIAAPDTLSVTVFFMLCLIAQHPKVEEALMKEIQTVLGERDLKNDDMQKLKVMENFINESMRYQPVVDIVMRKALEDDVIDGYPVKKGTNIILNIGRMHKLEFFPKPNEFTLENFEKNVPYRYFQPFGFGPRSCAGKFIAMVMMKVMLVSLLRRFHVKTLQGNCLENMQKTNDLALHPDESRSLPAMIFTPRNSEKCLEH</sequence>
<dbReference type="EC" id="1.14.14.14" evidence="2"/>
<dbReference type="EMBL" id="AF031520">
    <property type="protein sequence ID" value="AAC04698.1"/>
    <property type="molecule type" value="mRNA"/>
</dbReference>
<dbReference type="EMBL" id="AF031521">
    <property type="protein sequence ID" value="AAC04699.1"/>
    <property type="molecule type" value="mRNA"/>
</dbReference>
<dbReference type="EMBL" id="AJ012610">
    <property type="protein sequence ID" value="CAB38442.1"/>
    <property type="molecule type" value="mRNA"/>
</dbReference>
<dbReference type="RefSeq" id="NP_001075274.1">
    <property type="nucleotide sequence ID" value="NM_001081805.3"/>
</dbReference>
<dbReference type="RefSeq" id="XP_005602644.1">
    <property type="nucleotide sequence ID" value="XM_005602587.4"/>
</dbReference>
<dbReference type="RefSeq" id="XP_005602645.1">
    <property type="nucleotide sequence ID" value="XM_005602588.4"/>
</dbReference>
<dbReference type="RefSeq" id="XP_023506539.1">
    <property type="nucleotide sequence ID" value="XM_023650771.2"/>
</dbReference>
<dbReference type="SMR" id="O46512"/>
<dbReference type="FunCoup" id="O46512">
    <property type="interactions" value="7"/>
</dbReference>
<dbReference type="STRING" id="9796.ENSECAP00000047527"/>
<dbReference type="PaxDb" id="9796-ENSECAP00000047527"/>
<dbReference type="Ensembl" id="ENSECAT00000070733.2">
    <property type="protein sequence ID" value="ENSECAP00000048342.2"/>
    <property type="gene ID" value="ENSECAG00000020474.4"/>
</dbReference>
<dbReference type="GeneID" id="100009712"/>
<dbReference type="KEGG" id="ecb:100009712"/>
<dbReference type="CTD" id="1588"/>
<dbReference type="VGNC" id="VGNC:50557">
    <property type="gene designation" value="CYP19A1"/>
</dbReference>
<dbReference type="GeneTree" id="ENSGT00840000129915"/>
<dbReference type="HOGENOM" id="CLU_041874_0_0_1"/>
<dbReference type="InParanoid" id="O46512"/>
<dbReference type="OrthoDB" id="1470350at2759"/>
<dbReference type="TreeFam" id="TF352039"/>
<dbReference type="Proteomes" id="UP000002281">
    <property type="component" value="Chromosome 1"/>
</dbReference>
<dbReference type="Bgee" id="ENSECAG00000020474">
    <property type="expression patterns" value="Expressed in chorionic villus and 13 other cell types or tissues"/>
</dbReference>
<dbReference type="ExpressionAtlas" id="O46512">
    <property type="expression patterns" value="baseline"/>
</dbReference>
<dbReference type="GO" id="GO:0005783">
    <property type="term" value="C:endoplasmic reticulum"/>
    <property type="evidence" value="ECO:0000318"/>
    <property type="project" value="GO_Central"/>
</dbReference>
<dbReference type="GO" id="GO:0005789">
    <property type="term" value="C:endoplasmic reticulum membrane"/>
    <property type="evidence" value="ECO:0007669"/>
    <property type="project" value="UniProtKB-SubCell"/>
</dbReference>
<dbReference type="GO" id="GO:0070330">
    <property type="term" value="F:aromatase activity"/>
    <property type="evidence" value="ECO:0000250"/>
    <property type="project" value="UniProtKB"/>
</dbReference>
<dbReference type="GO" id="GO:0101021">
    <property type="term" value="F:estrogen 2-hydroxylase activity"/>
    <property type="evidence" value="ECO:0007669"/>
    <property type="project" value="RHEA"/>
</dbReference>
<dbReference type="GO" id="GO:0020037">
    <property type="term" value="F:heme binding"/>
    <property type="evidence" value="ECO:0000250"/>
    <property type="project" value="UniProtKB"/>
</dbReference>
<dbReference type="GO" id="GO:0005506">
    <property type="term" value="F:iron ion binding"/>
    <property type="evidence" value="ECO:0007669"/>
    <property type="project" value="InterPro"/>
</dbReference>
<dbReference type="GO" id="GO:0008585">
    <property type="term" value="P:female gonad development"/>
    <property type="evidence" value="ECO:0000318"/>
    <property type="project" value="GO_Central"/>
</dbReference>
<dbReference type="GO" id="GO:0006629">
    <property type="term" value="P:lipid metabolic process"/>
    <property type="evidence" value="ECO:0007669"/>
    <property type="project" value="UniProtKB-KW"/>
</dbReference>
<dbReference type="GO" id="GO:0032355">
    <property type="term" value="P:response to estradiol"/>
    <property type="evidence" value="ECO:0000318"/>
    <property type="project" value="GO_Central"/>
</dbReference>
<dbReference type="CDD" id="cd20616">
    <property type="entry name" value="CYP19A1"/>
    <property type="match status" value="1"/>
</dbReference>
<dbReference type="FunFam" id="1.10.630.10:FF:000032">
    <property type="entry name" value="Cytochrome P450 aromatase"/>
    <property type="match status" value="1"/>
</dbReference>
<dbReference type="Gene3D" id="1.10.630.10">
    <property type="entry name" value="Cytochrome P450"/>
    <property type="match status" value="1"/>
</dbReference>
<dbReference type="InterPro" id="IPR001128">
    <property type="entry name" value="Cyt_P450"/>
</dbReference>
<dbReference type="InterPro" id="IPR017972">
    <property type="entry name" value="Cyt_P450_CS"/>
</dbReference>
<dbReference type="InterPro" id="IPR002401">
    <property type="entry name" value="Cyt_P450_E_grp-I"/>
</dbReference>
<dbReference type="InterPro" id="IPR036396">
    <property type="entry name" value="Cyt_P450_sf"/>
</dbReference>
<dbReference type="InterPro" id="IPR050196">
    <property type="entry name" value="Cytochrome_P450_Monoox"/>
</dbReference>
<dbReference type="PANTHER" id="PTHR24291:SF43">
    <property type="entry name" value="AROMATASE"/>
    <property type="match status" value="1"/>
</dbReference>
<dbReference type="PANTHER" id="PTHR24291">
    <property type="entry name" value="CYTOCHROME P450 FAMILY 4"/>
    <property type="match status" value="1"/>
</dbReference>
<dbReference type="Pfam" id="PF00067">
    <property type="entry name" value="p450"/>
    <property type="match status" value="1"/>
</dbReference>
<dbReference type="PRINTS" id="PR00463">
    <property type="entry name" value="EP450I"/>
</dbReference>
<dbReference type="PRINTS" id="PR00385">
    <property type="entry name" value="P450"/>
</dbReference>
<dbReference type="SUPFAM" id="SSF48264">
    <property type="entry name" value="Cytochrome P450"/>
    <property type="match status" value="1"/>
</dbReference>
<dbReference type="PROSITE" id="PS00086">
    <property type="entry name" value="CYTOCHROME_P450"/>
    <property type="match status" value="1"/>
</dbReference>
<protein>
    <recommendedName>
        <fullName evidence="4">Aromatase</fullName>
        <ecNumber evidence="2">1.14.14.14</ecNumber>
    </recommendedName>
    <alternativeName>
        <fullName>CYPXIX</fullName>
    </alternativeName>
    <alternativeName>
        <fullName>Cytochrome P-450AROM</fullName>
    </alternativeName>
    <alternativeName>
        <fullName>Cytochrome P450 17-alpha</fullName>
    </alternativeName>
    <alternativeName>
        <fullName>Cytochrome P450 19A1</fullName>
    </alternativeName>
    <alternativeName>
        <fullName>Estrogen synthase</fullName>
    </alternativeName>
</protein>
<evidence type="ECO:0000250" key="1"/>
<evidence type="ECO:0000250" key="2">
    <source>
        <dbReference type="UniProtKB" id="P11511"/>
    </source>
</evidence>
<evidence type="ECO:0000255" key="3"/>
<evidence type="ECO:0000303" key="4">
    <source>
    </source>
</evidence>
<evidence type="ECO:0000305" key="5"/>
<keyword id="KW-0256">Endoplasmic reticulum</keyword>
<keyword id="KW-0349">Heme</keyword>
<keyword id="KW-0408">Iron</keyword>
<keyword id="KW-0443">Lipid metabolism</keyword>
<keyword id="KW-0472">Membrane</keyword>
<keyword id="KW-0479">Metal-binding</keyword>
<keyword id="KW-0492">Microsome</keyword>
<keyword id="KW-0503">Monooxygenase</keyword>
<keyword id="KW-0560">Oxidoreductase</keyword>
<keyword id="KW-1185">Reference proteome</keyword>
<keyword id="KW-0812">Transmembrane</keyword>
<keyword id="KW-1133">Transmembrane helix</keyword>
<organism>
    <name type="scientific">Equus caballus</name>
    <name type="common">Horse</name>
    <dbReference type="NCBI Taxonomy" id="9796"/>
    <lineage>
        <taxon>Eukaryota</taxon>
        <taxon>Metazoa</taxon>
        <taxon>Chordata</taxon>
        <taxon>Craniata</taxon>
        <taxon>Vertebrata</taxon>
        <taxon>Euteleostomi</taxon>
        <taxon>Mammalia</taxon>
        <taxon>Eutheria</taxon>
        <taxon>Laurasiatheria</taxon>
        <taxon>Perissodactyla</taxon>
        <taxon>Equidae</taxon>
        <taxon>Equus</taxon>
    </lineage>
</organism>
<gene>
    <name type="primary">CYP19A1</name>
    <name type="synonym">CYP19</name>
</gene>
<proteinExistence type="evidence at transcript level"/>
<comment type="function">
    <text evidence="2">A cytochrome P450 monooxygenase that catalyzes the conversion of C19 androgens, androst-4-ene-3,17-dione (androstenedione) and testosterone to the C18 estrogens, estrone and estradiol, respectively. Catalyzes three successive oxidations of C19 androgens: two conventional oxidations at C19 yielding 19-hydroxy and 19-oxo/19-aldehyde derivatives, followed by a third oxidative aromatization step that involves C1-beta hydrogen abstraction combined with cleavage of the C10-C19 bond to yield a phenolic A ring and formic acid. Alternatively, the third oxidative reaction yields a 19-norsteroid and formic acid. Converts dihydrotestosterone to delta1,10-dehydro 19-nordihydrotestosterone and may play a role in homeostasis of this potent androgen. Also displays 2-hydroxylase activity toward estrone. Mechanistically, uses molecular oxygen inserting one oxygen atom into a substrate, and reducing the second into a water molecule, with two electrons provided by NADPH via cytochrome P450 reductase (CPR; NADPH-ferrihemoprotein reductase).</text>
</comment>
<comment type="catalytic activity">
    <reaction evidence="2">
        <text>testosterone + 3 reduced [NADPH--hemoprotein reductase] + 3 O2 = 17beta-estradiol + formate + 3 oxidized [NADPH--hemoprotein reductase] + 4 H2O + 4 H(+)</text>
        <dbReference type="Rhea" id="RHEA:38191"/>
        <dbReference type="Rhea" id="RHEA-COMP:11964"/>
        <dbReference type="Rhea" id="RHEA-COMP:11965"/>
        <dbReference type="ChEBI" id="CHEBI:15377"/>
        <dbReference type="ChEBI" id="CHEBI:15378"/>
        <dbReference type="ChEBI" id="CHEBI:15379"/>
        <dbReference type="ChEBI" id="CHEBI:15740"/>
        <dbReference type="ChEBI" id="CHEBI:16469"/>
        <dbReference type="ChEBI" id="CHEBI:17347"/>
        <dbReference type="ChEBI" id="CHEBI:57618"/>
        <dbReference type="ChEBI" id="CHEBI:58210"/>
        <dbReference type="EC" id="1.14.14.14"/>
    </reaction>
    <physiologicalReaction direction="left-to-right" evidence="2">
        <dbReference type="Rhea" id="RHEA:38192"/>
    </physiologicalReaction>
</comment>
<comment type="catalytic activity">
    <reaction evidence="2">
        <text>androst-4-ene-3,17-dione + 3 reduced [NADPH--hemoprotein reductase] + 3 O2 = estrone + formate + 3 oxidized [NADPH--hemoprotein reductase] + 4 H2O + 4 H(+)</text>
        <dbReference type="Rhea" id="RHEA:38195"/>
        <dbReference type="Rhea" id="RHEA-COMP:11964"/>
        <dbReference type="Rhea" id="RHEA-COMP:11965"/>
        <dbReference type="ChEBI" id="CHEBI:15377"/>
        <dbReference type="ChEBI" id="CHEBI:15378"/>
        <dbReference type="ChEBI" id="CHEBI:15379"/>
        <dbReference type="ChEBI" id="CHEBI:15740"/>
        <dbReference type="ChEBI" id="CHEBI:16422"/>
        <dbReference type="ChEBI" id="CHEBI:17263"/>
        <dbReference type="ChEBI" id="CHEBI:57618"/>
        <dbReference type="ChEBI" id="CHEBI:58210"/>
        <dbReference type="EC" id="1.14.14.14"/>
    </reaction>
    <physiologicalReaction direction="left-to-right" evidence="2">
        <dbReference type="Rhea" id="RHEA:38196"/>
    </physiologicalReaction>
</comment>
<comment type="catalytic activity">
    <reaction evidence="2">
        <text>androst-4-ene-3,17-dione + reduced [NADPH--hemoprotein reductase] + O2 = 19-hydroxyandrost-4-ene-3,17-dione + oxidized [NADPH--hemoprotein reductase] + H2O + H(+)</text>
        <dbReference type="Rhea" id="RHEA:38199"/>
        <dbReference type="Rhea" id="RHEA-COMP:11964"/>
        <dbReference type="Rhea" id="RHEA-COMP:11965"/>
        <dbReference type="ChEBI" id="CHEBI:15377"/>
        <dbReference type="ChEBI" id="CHEBI:15378"/>
        <dbReference type="ChEBI" id="CHEBI:15379"/>
        <dbReference type="ChEBI" id="CHEBI:16422"/>
        <dbReference type="ChEBI" id="CHEBI:27576"/>
        <dbReference type="ChEBI" id="CHEBI:57618"/>
        <dbReference type="ChEBI" id="CHEBI:58210"/>
    </reaction>
    <physiologicalReaction direction="left-to-right" evidence="2">
        <dbReference type="Rhea" id="RHEA:38200"/>
    </physiologicalReaction>
</comment>
<comment type="catalytic activity">
    <reaction evidence="2">
        <text>19-hydroxyandrost-4-ene-3,17-dione + reduced [NADPH--hemoprotein reductase] + O2 = 19-oxo-androst-4-ene-3,17-dione + oxidized [NADPH--hemoprotein reductase] + 2 H2O + H(+)</text>
        <dbReference type="Rhea" id="RHEA:38203"/>
        <dbReference type="Rhea" id="RHEA-COMP:11964"/>
        <dbReference type="Rhea" id="RHEA-COMP:11965"/>
        <dbReference type="ChEBI" id="CHEBI:799"/>
        <dbReference type="ChEBI" id="CHEBI:15377"/>
        <dbReference type="ChEBI" id="CHEBI:15378"/>
        <dbReference type="ChEBI" id="CHEBI:15379"/>
        <dbReference type="ChEBI" id="CHEBI:27576"/>
        <dbReference type="ChEBI" id="CHEBI:57618"/>
        <dbReference type="ChEBI" id="CHEBI:58210"/>
    </reaction>
    <physiologicalReaction direction="left-to-right" evidence="2">
        <dbReference type="Rhea" id="RHEA:38204"/>
    </physiologicalReaction>
</comment>
<comment type="catalytic activity">
    <reaction evidence="2">
        <text>19-oxo-androst-4-ene-3,17-dione + reduced [NADPH--hemoprotein reductase] + O2 = estrone + formate + oxidized [NADPH--hemoprotein reductase] + H2O + 2 H(+)</text>
        <dbReference type="Rhea" id="RHEA:38207"/>
        <dbReference type="Rhea" id="RHEA-COMP:11964"/>
        <dbReference type="Rhea" id="RHEA-COMP:11965"/>
        <dbReference type="ChEBI" id="CHEBI:799"/>
        <dbReference type="ChEBI" id="CHEBI:15377"/>
        <dbReference type="ChEBI" id="CHEBI:15378"/>
        <dbReference type="ChEBI" id="CHEBI:15379"/>
        <dbReference type="ChEBI" id="CHEBI:15740"/>
        <dbReference type="ChEBI" id="CHEBI:17263"/>
        <dbReference type="ChEBI" id="CHEBI:57618"/>
        <dbReference type="ChEBI" id="CHEBI:58210"/>
    </reaction>
    <physiologicalReaction direction="left-to-right" evidence="2">
        <dbReference type="Rhea" id="RHEA:38208"/>
    </physiologicalReaction>
</comment>
<comment type="catalytic activity">
    <reaction evidence="2">
        <text>estrone + reduced [NADPH--hemoprotein reductase] + O2 = 2-hydroxyestrone + oxidized [NADPH--hemoprotein reductase] + H2O + H(+)</text>
        <dbReference type="Rhea" id="RHEA:47208"/>
        <dbReference type="Rhea" id="RHEA-COMP:11964"/>
        <dbReference type="Rhea" id="RHEA-COMP:11965"/>
        <dbReference type="ChEBI" id="CHEBI:1156"/>
        <dbReference type="ChEBI" id="CHEBI:15377"/>
        <dbReference type="ChEBI" id="CHEBI:15378"/>
        <dbReference type="ChEBI" id="CHEBI:15379"/>
        <dbReference type="ChEBI" id="CHEBI:17263"/>
        <dbReference type="ChEBI" id="CHEBI:57618"/>
        <dbReference type="ChEBI" id="CHEBI:58210"/>
    </reaction>
    <physiologicalReaction direction="left-to-right" evidence="2">
        <dbReference type="Rhea" id="RHEA:47209"/>
    </physiologicalReaction>
</comment>
<comment type="catalytic activity">
    <reaction evidence="2">
        <text>17beta-hydroxy-5alpha-androstan-3-one + reduced [NADPH--hemoprotein reductase] + O2 = 17beta,19-dihydroxy-3-oxo-5alpha-androstanone + oxidized [NADPH--hemoprotein reductase] + H2O + H(+)</text>
        <dbReference type="Rhea" id="RHEA:53200"/>
        <dbReference type="Rhea" id="RHEA-COMP:11964"/>
        <dbReference type="Rhea" id="RHEA-COMP:11965"/>
        <dbReference type="ChEBI" id="CHEBI:15377"/>
        <dbReference type="ChEBI" id="CHEBI:15378"/>
        <dbReference type="ChEBI" id="CHEBI:15379"/>
        <dbReference type="ChEBI" id="CHEBI:16330"/>
        <dbReference type="ChEBI" id="CHEBI:57618"/>
        <dbReference type="ChEBI" id="CHEBI:58210"/>
        <dbReference type="ChEBI" id="CHEBI:137031"/>
    </reaction>
    <physiologicalReaction direction="left-to-right" evidence="2">
        <dbReference type="Rhea" id="RHEA:53201"/>
    </physiologicalReaction>
</comment>
<comment type="catalytic activity">
    <reaction evidence="2">
        <text>17beta,19-dihydroxy-3-oxo-5alpha-androstanone + reduced [NADPH--hemoprotein reductase] + O2 = 17beta-hydroxy-3,19-dioxo-5alpha-androstanone + oxidized [NADPH--hemoprotein reductase] + 2 H2O + H(+)</text>
        <dbReference type="Rhea" id="RHEA:53204"/>
        <dbReference type="Rhea" id="RHEA-COMP:11964"/>
        <dbReference type="Rhea" id="RHEA-COMP:11965"/>
        <dbReference type="ChEBI" id="CHEBI:15377"/>
        <dbReference type="ChEBI" id="CHEBI:15378"/>
        <dbReference type="ChEBI" id="CHEBI:15379"/>
        <dbReference type="ChEBI" id="CHEBI:57618"/>
        <dbReference type="ChEBI" id="CHEBI:58210"/>
        <dbReference type="ChEBI" id="CHEBI:137031"/>
        <dbReference type="ChEBI" id="CHEBI:137032"/>
    </reaction>
    <physiologicalReaction direction="left-to-right" evidence="2">
        <dbReference type="Rhea" id="RHEA:53205"/>
    </physiologicalReaction>
</comment>
<comment type="catalytic activity">
    <reaction evidence="2">
        <text>17beta-hydroxy-3,19-dioxo-5alpha-androstanone + reduced [NADPH--hemoprotein reductase] + O2 = 17beta-hydroxy-3-oxo-19-nor-5alpha-androst-1-ene + formate + oxidized [NADPH--hemoprotein reductase] + H2O + 2 H(+)</text>
        <dbReference type="Rhea" id="RHEA:53276"/>
        <dbReference type="Rhea" id="RHEA-COMP:11964"/>
        <dbReference type="Rhea" id="RHEA-COMP:11965"/>
        <dbReference type="ChEBI" id="CHEBI:15377"/>
        <dbReference type="ChEBI" id="CHEBI:15378"/>
        <dbReference type="ChEBI" id="CHEBI:15379"/>
        <dbReference type="ChEBI" id="CHEBI:15740"/>
        <dbReference type="ChEBI" id="CHEBI:57618"/>
        <dbReference type="ChEBI" id="CHEBI:58210"/>
        <dbReference type="ChEBI" id="CHEBI:137032"/>
        <dbReference type="ChEBI" id="CHEBI:137110"/>
    </reaction>
    <physiologicalReaction direction="left-to-right" evidence="2">
        <dbReference type="Rhea" id="RHEA:53277"/>
    </physiologicalReaction>
</comment>
<comment type="cofactor">
    <cofactor evidence="2">
        <name>heme</name>
        <dbReference type="ChEBI" id="CHEBI:30413"/>
    </cofactor>
</comment>
<comment type="pathway">
    <text evidence="2">Steroid hormone biosynthesis.</text>
</comment>
<comment type="subcellular location">
    <subcellularLocation>
        <location evidence="2">Endoplasmic reticulum membrane</location>
        <topology evidence="5">Multi-pass membrane protein</topology>
    </subcellularLocation>
    <subcellularLocation>
        <location evidence="2">Microsome membrane</location>
        <topology evidence="5">Multi-pass membrane protein</topology>
    </subcellularLocation>
</comment>
<comment type="tissue specificity">
    <text>Expressed in placenta. Highly expressed in follicles (0 hour:hCG), followed by a drop (12-24 hour:hCG) and by an increase (30-39 hour:hCG). Highly expressed in corpora lutea. Also expressed in granulosa cell layer. Not expressed in theca interna.</text>
</comment>
<comment type="domain">
    <text>Contains a I helix thought to serve as the substrate-binding pocket.</text>
</comment>
<comment type="similarity">
    <text evidence="5">Belongs to the cytochrome P450 family.</text>
</comment>
<comment type="caution">
    <text evidence="5">Clone A1 form may be a splice variant or an artifact.</text>
</comment>
<feature type="chain" id="PRO_0000051954" description="Aromatase">
    <location>
        <begin position="1"/>
        <end position="503"/>
    </location>
</feature>
<feature type="transmembrane region" description="Helical" evidence="3">
    <location>
        <begin position="19"/>
        <end position="39"/>
    </location>
</feature>
<feature type="transmembrane region" description="Helical" evidence="3">
    <location>
        <begin position="51"/>
        <end position="71"/>
    </location>
</feature>
<feature type="region of interest" description="Substrate-binding pocket" evidence="3">
    <location>
        <begin position="294"/>
        <end position="324"/>
    </location>
</feature>
<feature type="binding site" evidence="1">
    <location>
        <position position="309"/>
    </location>
    <ligand>
        <name>substrate</name>
    </ligand>
</feature>
<feature type="binding site" evidence="1">
    <location>
        <position position="374"/>
    </location>
    <ligand>
        <name>substrate</name>
    </ligand>
</feature>
<feature type="binding site" description="axial binding residue" evidence="1">
    <location>
        <position position="437"/>
    </location>
    <ligand>
        <name>heme</name>
        <dbReference type="ChEBI" id="CHEBI:30413"/>
    </ligand>
    <ligandPart>
        <name>Fe</name>
        <dbReference type="ChEBI" id="CHEBI:18248"/>
    </ligandPart>
</feature>
<feature type="sequence conflict" description="In Ref. 1; clone A1." evidence="5" ref="1">
    <original>ERDLKN</original>
    <variation>RNLSNK</variation>
    <location>
        <begin position="342"/>
        <end position="347"/>
    </location>
</feature>
<feature type="sequence conflict" description="In Ref. 1; clone A1." evidence="5" ref="1">
    <location>
        <begin position="348"/>
        <end position="503"/>
    </location>
</feature>
<name>CP19A_HORSE</name>